<proteinExistence type="inferred from homology"/>
<keyword id="KW-0687">Ribonucleoprotein</keyword>
<keyword id="KW-0689">Ribosomal protein</keyword>
<evidence type="ECO:0000255" key="1">
    <source>
        <dbReference type="HAMAP-Rule" id="MF_00508"/>
    </source>
</evidence>
<evidence type="ECO:0000305" key="2"/>
<organism>
    <name type="scientific">Mycobacterium sp. (strain KMS)</name>
    <dbReference type="NCBI Taxonomy" id="189918"/>
    <lineage>
        <taxon>Bacteria</taxon>
        <taxon>Bacillati</taxon>
        <taxon>Actinomycetota</taxon>
        <taxon>Actinomycetes</taxon>
        <taxon>Mycobacteriales</taxon>
        <taxon>Mycobacteriaceae</taxon>
        <taxon>Mycobacterium</taxon>
    </lineage>
</organism>
<protein>
    <recommendedName>
        <fullName evidence="1">Small ribosomal subunit protein uS10</fullName>
    </recommendedName>
    <alternativeName>
        <fullName evidence="2">30S ribosomal protein S10</fullName>
    </alternativeName>
</protein>
<feature type="chain" id="PRO_1000015062" description="Small ribosomal subunit protein uS10">
    <location>
        <begin position="1"/>
        <end position="101"/>
    </location>
</feature>
<reference key="1">
    <citation type="submission" date="2006-12" db="EMBL/GenBank/DDBJ databases">
        <title>Complete sequence of chromosome of Mycobacterium sp. KMS.</title>
        <authorList>
            <consortium name="US DOE Joint Genome Institute"/>
            <person name="Copeland A."/>
            <person name="Lucas S."/>
            <person name="Lapidus A."/>
            <person name="Barry K."/>
            <person name="Detter J.C."/>
            <person name="Glavina del Rio T."/>
            <person name="Hammon N."/>
            <person name="Israni S."/>
            <person name="Dalin E."/>
            <person name="Tice H."/>
            <person name="Pitluck S."/>
            <person name="Kiss H."/>
            <person name="Brettin T."/>
            <person name="Bruce D."/>
            <person name="Han C."/>
            <person name="Tapia R."/>
            <person name="Gilna P."/>
            <person name="Schmutz J."/>
            <person name="Larimer F."/>
            <person name="Land M."/>
            <person name="Hauser L."/>
            <person name="Kyrpides N."/>
            <person name="Mikhailova N."/>
            <person name="Miller C.D."/>
            <person name="Richardson P."/>
        </authorList>
    </citation>
    <scope>NUCLEOTIDE SEQUENCE [LARGE SCALE GENOMIC DNA]</scope>
    <source>
        <strain>KMS</strain>
    </source>
</reference>
<name>RS10_MYCSK</name>
<accession>A1UBN5</accession>
<dbReference type="EMBL" id="CP000518">
    <property type="protein sequence ID" value="ABL90243.1"/>
    <property type="molecule type" value="Genomic_DNA"/>
</dbReference>
<dbReference type="SMR" id="A1UBN5"/>
<dbReference type="STRING" id="189918.Mkms_1029"/>
<dbReference type="KEGG" id="mkm:Mkms_1029"/>
<dbReference type="HOGENOM" id="CLU_122625_1_3_11"/>
<dbReference type="OrthoDB" id="9804464at2"/>
<dbReference type="GO" id="GO:1990904">
    <property type="term" value="C:ribonucleoprotein complex"/>
    <property type="evidence" value="ECO:0007669"/>
    <property type="project" value="UniProtKB-KW"/>
</dbReference>
<dbReference type="GO" id="GO:0005840">
    <property type="term" value="C:ribosome"/>
    <property type="evidence" value="ECO:0007669"/>
    <property type="project" value="UniProtKB-KW"/>
</dbReference>
<dbReference type="GO" id="GO:0003735">
    <property type="term" value="F:structural constituent of ribosome"/>
    <property type="evidence" value="ECO:0007669"/>
    <property type="project" value="InterPro"/>
</dbReference>
<dbReference type="GO" id="GO:0000049">
    <property type="term" value="F:tRNA binding"/>
    <property type="evidence" value="ECO:0007669"/>
    <property type="project" value="UniProtKB-UniRule"/>
</dbReference>
<dbReference type="GO" id="GO:0006412">
    <property type="term" value="P:translation"/>
    <property type="evidence" value="ECO:0007669"/>
    <property type="project" value="UniProtKB-UniRule"/>
</dbReference>
<dbReference type="FunFam" id="3.30.70.600:FF:000001">
    <property type="entry name" value="30S ribosomal protein S10"/>
    <property type="match status" value="1"/>
</dbReference>
<dbReference type="Gene3D" id="3.30.70.600">
    <property type="entry name" value="Ribosomal protein S10 domain"/>
    <property type="match status" value="1"/>
</dbReference>
<dbReference type="HAMAP" id="MF_00508">
    <property type="entry name" value="Ribosomal_uS10"/>
    <property type="match status" value="1"/>
</dbReference>
<dbReference type="InterPro" id="IPR001848">
    <property type="entry name" value="Ribosomal_uS10"/>
</dbReference>
<dbReference type="InterPro" id="IPR018268">
    <property type="entry name" value="Ribosomal_uS10_CS"/>
</dbReference>
<dbReference type="InterPro" id="IPR027486">
    <property type="entry name" value="Ribosomal_uS10_dom"/>
</dbReference>
<dbReference type="InterPro" id="IPR036838">
    <property type="entry name" value="Ribosomal_uS10_dom_sf"/>
</dbReference>
<dbReference type="NCBIfam" id="NF001861">
    <property type="entry name" value="PRK00596.1"/>
    <property type="match status" value="1"/>
</dbReference>
<dbReference type="NCBIfam" id="TIGR01049">
    <property type="entry name" value="rpsJ_bact"/>
    <property type="match status" value="1"/>
</dbReference>
<dbReference type="PANTHER" id="PTHR11700">
    <property type="entry name" value="30S RIBOSOMAL PROTEIN S10 FAMILY MEMBER"/>
    <property type="match status" value="1"/>
</dbReference>
<dbReference type="Pfam" id="PF00338">
    <property type="entry name" value="Ribosomal_S10"/>
    <property type="match status" value="1"/>
</dbReference>
<dbReference type="PRINTS" id="PR00971">
    <property type="entry name" value="RIBOSOMALS10"/>
</dbReference>
<dbReference type="SMART" id="SM01403">
    <property type="entry name" value="Ribosomal_S10"/>
    <property type="match status" value="1"/>
</dbReference>
<dbReference type="SUPFAM" id="SSF54999">
    <property type="entry name" value="Ribosomal protein S10"/>
    <property type="match status" value="1"/>
</dbReference>
<dbReference type="PROSITE" id="PS00361">
    <property type="entry name" value="RIBOSOMAL_S10"/>
    <property type="match status" value="1"/>
</dbReference>
<gene>
    <name evidence="1" type="primary">rpsJ</name>
    <name type="ordered locus">Mkms_1029</name>
</gene>
<sequence length="101" mass="11433">MAGQKIRIRLKAYDHEAIDASARKIVETVTRTGASVVGPVPLPTEKNVYCVIRSPHKYKDSREHFEMRTHKRLIDILDPTPKTVDALMRIDLPASVDVNIQ</sequence>
<comment type="function">
    <text evidence="1">Involved in the binding of tRNA to the ribosomes.</text>
</comment>
<comment type="subunit">
    <text evidence="1">Part of the 30S ribosomal subunit.</text>
</comment>
<comment type="similarity">
    <text evidence="1">Belongs to the universal ribosomal protein uS10 family.</text>
</comment>